<reference key="1">
    <citation type="journal article" date="2005" name="Nucleic Acids Res.">
        <title>The genome sequence of Salmonella enterica serovar Choleraesuis, a highly invasive and resistant zoonotic pathogen.</title>
        <authorList>
            <person name="Chiu C.-H."/>
            <person name="Tang P."/>
            <person name="Chu C."/>
            <person name="Hu S."/>
            <person name="Bao Q."/>
            <person name="Yu J."/>
            <person name="Chou Y.-Y."/>
            <person name="Wang H.-S."/>
            <person name="Lee Y.-S."/>
        </authorList>
    </citation>
    <scope>NUCLEOTIDE SEQUENCE [LARGE SCALE GENOMIC DNA]</scope>
    <source>
        <strain>SC-B67</strain>
    </source>
</reference>
<accession>Q57SA6</accession>
<evidence type="ECO:0000255" key="1">
    <source>
        <dbReference type="HAMAP-Rule" id="MF_01847"/>
    </source>
</evidence>
<protein>
    <recommendedName>
        <fullName evidence="1">HMP-PP phosphatase</fullName>
        <ecNumber evidence="1">3.6.1.-</ecNumber>
    </recommendedName>
</protein>
<sequence length="272" mass="30073">MARLAAFDMDGTLLMPDHHLGRETIATLSRLRERDITLTFATGRHVLEMRHILGTLSLDAYLITGNGTRIHSLEGDVLHRQDLDPQVADTVMHHAWDTRASMHVFNDNGWFTGQEIPALLQAHVYSGFRYQVIDIKSIPAHQVTKICFCGDHDDLIRLRIQLNEALEERAHLCFSAVDCLEVLPLGGNKGSALAVLSNHLGLSLADCMAFGDAMNDREMLGSVGRGLIMGNAMPQLIAALPHLSVIGHCGNQAVSHFLTHWLDNPHLPYSPE</sequence>
<dbReference type="EC" id="3.6.1.-" evidence="1"/>
<dbReference type="EMBL" id="AE017220">
    <property type="protein sequence ID" value="AAX64405.1"/>
    <property type="molecule type" value="Genomic_DNA"/>
</dbReference>
<dbReference type="RefSeq" id="WP_011264211.1">
    <property type="nucleotide sequence ID" value="NC_006905.1"/>
</dbReference>
<dbReference type="SMR" id="Q57SA6"/>
<dbReference type="KEGG" id="sec:SCH_0499"/>
<dbReference type="HOGENOM" id="CLU_044146_5_2_6"/>
<dbReference type="Proteomes" id="UP000000538">
    <property type="component" value="Chromosome"/>
</dbReference>
<dbReference type="GO" id="GO:0002145">
    <property type="term" value="F:4-amino-5-hydroxymethyl-2-methylpyrimidine diphosphatase activity"/>
    <property type="evidence" value="ECO:0007669"/>
    <property type="project" value="RHEA"/>
</dbReference>
<dbReference type="GO" id="GO:0000287">
    <property type="term" value="F:magnesium ion binding"/>
    <property type="evidence" value="ECO:0000250"/>
    <property type="project" value="UniProtKB"/>
</dbReference>
<dbReference type="GO" id="GO:0016791">
    <property type="term" value="F:phosphatase activity"/>
    <property type="evidence" value="ECO:0000250"/>
    <property type="project" value="UniProtKB"/>
</dbReference>
<dbReference type="CDD" id="cd07516">
    <property type="entry name" value="HAD_Pase"/>
    <property type="match status" value="1"/>
</dbReference>
<dbReference type="FunFam" id="3.30.1240.10:FF:000002">
    <property type="entry name" value="HMP-PP phosphatase"/>
    <property type="match status" value="1"/>
</dbReference>
<dbReference type="Gene3D" id="3.30.1240.10">
    <property type="match status" value="1"/>
</dbReference>
<dbReference type="Gene3D" id="3.40.50.1000">
    <property type="entry name" value="HAD superfamily/HAD-like"/>
    <property type="match status" value="1"/>
</dbReference>
<dbReference type="HAMAP" id="MF_01847">
    <property type="entry name" value="HMP_PP_phosphat"/>
    <property type="match status" value="1"/>
</dbReference>
<dbReference type="InterPro" id="IPR000150">
    <property type="entry name" value="Cof"/>
</dbReference>
<dbReference type="InterPro" id="IPR036412">
    <property type="entry name" value="HAD-like_sf"/>
</dbReference>
<dbReference type="InterPro" id="IPR006379">
    <property type="entry name" value="HAD-SF_hydro_IIB"/>
</dbReference>
<dbReference type="InterPro" id="IPR023214">
    <property type="entry name" value="HAD_sf"/>
</dbReference>
<dbReference type="InterPro" id="IPR023938">
    <property type="entry name" value="HMP-PP_phosphatase"/>
</dbReference>
<dbReference type="NCBIfam" id="TIGR00099">
    <property type="entry name" value="Cof-subfamily"/>
    <property type="match status" value="1"/>
</dbReference>
<dbReference type="NCBIfam" id="TIGR01484">
    <property type="entry name" value="HAD-SF-IIB"/>
    <property type="match status" value="1"/>
</dbReference>
<dbReference type="NCBIfam" id="NF011705">
    <property type="entry name" value="PRK15126.1"/>
    <property type="match status" value="1"/>
</dbReference>
<dbReference type="PANTHER" id="PTHR47267">
    <property type="match status" value="1"/>
</dbReference>
<dbReference type="PANTHER" id="PTHR47267:SF2">
    <property type="entry name" value="HMP-PP PHOSPHATASE"/>
    <property type="match status" value="1"/>
</dbReference>
<dbReference type="Pfam" id="PF08282">
    <property type="entry name" value="Hydrolase_3"/>
    <property type="match status" value="1"/>
</dbReference>
<dbReference type="SFLD" id="SFLDG01140">
    <property type="entry name" value="C2.B:_Phosphomannomutase_and_P"/>
    <property type="match status" value="1"/>
</dbReference>
<dbReference type="SFLD" id="SFLDS00003">
    <property type="entry name" value="Haloacid_Dehalogenase"/>
    <property type="match status" value="1"/>
</dbReference>
<dbReference type="SUPFAM" id="SSF56784">
    <property type="entry name" value="HAD-like"/>
    <property type="match status" value="1"/>
</dbReference>
<dbReference type="PROSITE" id="PS01228">
    <property type="entry name" value="COF_1"/>
    <property type="match status" value="1"/>
</dbReference>
<dbReference type="PROSITE" id="PS01229">
    <property type="entry name" value="COF_2"/>
    <property type="match status" value="1"/>
</dbReference>
<proteinExistence type="inferred from homology"/>
<feature type="chain" id="PRO_0000342989" description="HMP-PP phosphatase">
    <location>
        <begin position="1"/>
        <end position="272"/>
    </location>
</feature>
<feature type="active site" description="Nucleophile" evidence="1">
    <location>
        <position position="8"/>
    </location>
</feature>
<feature type="binding site" evidence="1">
    <location>
        <position position="8"/>
    </location>
    <ligand>
        <name>Mg(2+)</name>
        <dbReference type="ChEBI" id="CHEBI:18420"/>
    </ligand>
</feature>
<feature type="binding site" evidence="1">
    <location>
        <position position="10"/>
    </location>
    <ligand>
        <name>Mg(2+)</name>
        <dbReference type="ChEBI" id="CHEBI:18420"/>
    </ligand>
</feature>
<feature type="binding site" evidence="1">
    <location>
        <position position="212"/>
    </location>
    <ligand>
        <name>Mg(2+)</name>
        <dbReference type="ChEBI" id="CHEBI:18420"/>
    </ligand>
</feature>
<keyword id="KW-0378">Hydrolase</keyword>
<keyword id="KW-0460">Magnesium</keyword>
<keyword id="KW-0479">Metal-binding</keyword>
<organism>
    <name type="scientific">Salmonella choleraesuis (strain SC-B67)</name>
    <dbReference type="NCBI Taxonomy" id="321314"/>
    <lineage>
        <taxon>Bacteria</taxon>
        <taxon>Pseudomonadati</taxon>
        <taxon>Pseudomonadota</taxon>
        <taxon>Gammaproteobacteria</taxon>
        <taxon>Enterobacterales</taxon>
        <taxon>Enterobacteriaceae</taxon>
        <taxon>Salmonella</taxon>
    </lineage>
</organism>
<name>COF_SALCH</name>
<gene>
    <name evidence="1" type="primary">cof</name>
    <name type="ordered locus">SCH_0499</name>
</gene>
<comment type="function">
    <text evidence="1">Catalyzes the hydrolysis of 4-amino-2-methyl-5-hydroxymethylpyrimidine pyrophosphate (HMP-PP) to 4-amino-2-methyl-5-hydroxymethylpyrimidine phosphate (HMP-P).</text>
</comment>
<comment type="catalytic activity">
    <reaction evidence="1">
        <text>4-amino-2-methyl-5-(diphosphooxymethyl)pyrimidine + H2O = 4-amino-2-methyl-5-(phosphooxymethyl)pyrimidine + phosphate + H(+)</text>
        <dbReference type="Rhea" id="RHEA:27914"/>
        <dbReference type="ChEBI" id="CHEBI:15377"/>
        <dbReference type="ChEBI" id="CHEBI:15378"/>
        <dbReference type="ChEBI" id="CHEBI:43474"/>
        <dbReference type="ChEBI" id="CHEBI:57841"/>
        <dbReference type="ChEBI" id="CHEBI:58354"/>
    </reaction>
</comment>
<comment type="cofactor">
    <cofactor evidence="1">
        <name>Mg(2+)</name>
        <dbReference type="ChEBI" id="CHEBI:18420"/>
    </cofactor>
</comment>
<comment type="similarity">
    <text evidence="1">Belongs to the HAD-like hydrolase superfamily. Cof family.</text>
</comment>